<sequence length="804" mass="90455">MGDTMVEPVPVKLSDQSLVLRGNGGSALCVITEGVGEASLVIDPDVAQKACQEVLEKVKMIHGSSVESLDKVDGGDAGDGGSLANGDTEPKLTNTGHTSTSSRINEEESPLDINSVKNARRRQKNNSAKQSWLLRLFECKLFDVSMAISYLYNSKEPGVQAYIGNRLFCFRYEDVDFYLPQLLNMYIHMDEDVGDAIKPYVVHRCRQSINFSLQCAWLLGAYSSDMHISTQRHSRGTKLRKLILSDELKPAHKKREIPPLSLAPDTGLSPSKRTHQRSKSDATVSISLSSNLKRTSSNPKVENDDEPVRLAPEREFIKSLMGIGKRLATLPTKEQKTQRLISELSLLNHKLPARVWLPTAGFDHHVVRVPHTQAVVLNSKDKAPYLIYVEVLECENFETSLVPVRIPENRIRSTRSVENLPECGITHEQRASSFTTVPNYDNDDEAWSVDDIGELQVELPELHTNSCDNISQFSVDSITSQESKDPVFIAAGDIRRRLSEQLAHTPTTFRRDPEDPSAVALKEPWEEKVRRIREGSPYGHFPNWRLLSVIVKCGDDLRQELLASQVLKQLQSIWESERVPLWIRPYKILVISGDSGMIEPVVNAVSIHQVKKQSQLSLLHYFLQEHGSCTTEAFLTAQRNFVQSCAAYCLVCYLLQVKDRHNGNILLDAEGHIIHIDFGFILSSSPRNLGFETSAFKLTAEFVDVMGGLNGDMFNYYKMLMLQGLIAARKHMDKVVQVVEIMQQGSQLPCFHGSSTIRNLKERFHMNMTEEQLQILVEQMVDGSMRSITTKLYDGFQYLTNGIM</sequence>
<reference key="1">
    <citation type="submission" date="2004-06" db="EMBL/GenBank/DDBJ databases">
        <authorList>
            <consortium name="NIH - Xenopus Gene Collection (XGC) project"/>
        </authorList>
    </citation>
    <scope>NUCLEOTIDE SEQUENCE [LARGE SCALE MRNA]</scope>
    <source>
        <tissue>Oocyte</tissue>
    </source>
</reference>
<comment type="function">
    <text evidence="2">Phosphorylates phosphatidylinositol (PI) in the first committed step in the production of the second messenger inositol-1,4,5,-trisphosphate (PIP). May play an important role in the inner ear development.</text>
</comment>
<comment type="catalytic activity">
    <reaction evidence="2">
        <text>a 1,2-diacyl-sn-glycero-3-phospho-(1D-myo-inositol) + ATP = a 1,2-diacyl-sn-glycero-3-phospho-(1D-myo-inositol 4-phosphate) + ADP + H(+)</text>
        <dbReference type="Rhea" id="RHEA:19877"/>
        <dbReference type="ChEBI" id="CHEBI:15378"/>
        <dbReference type="ChEBI" id="CHEBI:30616"/>
        <dbReference type="ChEBI" id="CHEBI:57880"/>
        <dbReference type="ChEBI" id="CHEBI:58178"/>
        <dbReference type="ChEBI" id="CHEBI:456216"/>
        <dbReference type="EC" id="2.7.1.67"/>
    </reaction>
    <physiologicalReaction direction="left-to-right" evidence="2">
        <dbReference type="Rhea" id="RHEA:19878"/>
    </physiologicalReaction>
</comment>
<comment type="cofactor">
    <cofactor evidence="2">
        <name>Mg(2+)</name>
        <dbReference type="ChEBI" id="CHEBI:18420"/>
    </cofactor>
    <cofactor evidence="2">
        <name>Mn(2+)</name>
        <dbReference type="ChEBI" id="CHEBI:29035"/>
    </cofactor>
</comment>
<comment type="subcellular location">
    <subcellularLocation>
        <location evidence="1">Endomembrane system</location>
    </subcellularLocation>
    <subcellularLocation>
        <location evidence="1">Mitochondrion outer membrane</location>
        <topology evidence="1">Peripheral membrane protein</topology>
    </subcellularLocation>
    <subcellularLocation>
        <location evidence="1">Rough endoplasmic reticulum membrane</location>
        <topology evidence="1">Peripheral membrane protein</topology>
    </subcellularLocation>
</comment>
<comment type="similarity">
    <text evidence="6">Belongs to the PI3/PI4-kinase family. Type III PI4K subfamily.</text>
</comment>
<feature type="chain" id="PRO_0000365170" description="Phosphatidylinositol 4-kinase beta">
    <location>
        <begin position="1"/>
        <end position="804"/>
    </location>
</feature>
<feature type="domain" description="PIK helical" evidence="4">
    <location>
        <begin position="55"/>
        <end position="245"/>
    </location>
</feature>
<feature type="domain" description="PI3K/PI4K catalytic" evidence="3">
    <location>
        <begin position="523"/>
        <end position="789"/>
    </location>
</feature>
<feature type="region of interest" description="Disordered" evidence="5">
    <location>
        <begin position="69"/>
        <end position="122"/>
    </location>
</feature>
<feature type="region of interest" description="Disordered" evidence="5">
    <location>
        <begin position="251"/>
        <end position="309"/>
    </location>
</feature>
<feature type="region of interest" description="G-loop" evidence="3">
    <location>
        <begin position="529"/>
        <end position="535"/>
    </location>
</feature>
<feature type="region of interest" description="Catalytic loop" evidence="3">
    <location>
        <begin position="656"/>
        <end position="664"/>
    </location>
</feature>
<feature type="region of interest" description="Activation loop" evidence="3">
    <location>
        <begin position="675"/>
        <end position="699"/>
    </location>
</feature>
<feature type="compositionally biased region" description="Polar residues" evidence="5">
    <location>
        <begin position="91"/>
        <end position="103"/>
    </location>
</feature>
<feature type="compositionally biased region" description="Polar residues" evidence="5">
    <location>
        <begin position="281"/>
        <end position="300"/>
    </location>
</feature>
<accession>Q6GN16</accession>
<keyword id="KW-0067">ATP-binding</keyword>
<keyword id="KW-0256">Endoplasmic reticulum</keyword>
<keyword id="KW-0418">Kinase</keyword>
<keyword id="KW-0443">Lipid metabolism</keyword>
<keyword id="KW-0472">Membrane</keyword>
<keyword id="KW-0496">Mitochondrion</keyword>
<keyword id="KW-1000">Mitochondrion outer membrane</keyword>
<keyword id="KW-0547">Nucleotide-binding</keyword>
<keyword id="KW-1185">Reference proteome</keyword>
<keyword id="KW-0808">Transferase</keyword>
<proteinExistence type="evidence at transcript level"/>
<organism>
    <name type="scientific">Xenopus laevis</name>
    <name type="common">African clawed frog</name>
    <dbReference type="NCBI Taxonomy" id="8355"/>
    <lineage>
        <taxon>Eukaryota</taxon>
        <taxon>Metazoa</taxon>
        <taxon>Chordata</taxon>
        <taxon>Craniata</taxon>
        <taxon>Vertebrata</taxon>
        <taxon>Euteleostomi</taxon>
        <taxon>Amphibia</taxon>
        <taxon>Batrachia</taxon>
        <taxon>Anura</taxon>
        <taxon>Pipoidea</taxon>
        <taxon>Pipidae</taxon>
        <taxon>Xenopodinae</taxon>
        <taxon>Xenopus</taxon>
        <taxon>Xenopus</taxon>
    </lineage>
</organism>
<protein>
    <recommendedName>
        <fullName>Phosphatidylinositol 4-kinase beta</fullName>
        <shortName>PI4K-beta</shortName>
        <shortName>PI4Kbeta</shortName>
        <shortName>PtdIns 4-kinase beta</shortName>
        <ecNumber evidence="2">2.7.1.67</ecNumber>
    </recommendedName>
</protein>
<dbReference type="EC" id="2.7.1.67" evidence="2"/>
<dbReference type="EMBL" id="BC073706">
    <property type="protein sequence ID" value="AAH73706.1"/>
    <property type="molecule type" value="mRNA"/>
</dbReference>
<dbReference type="RefSeq" id="NP_001086017.1">
    <property type="nucleotide sequence ID" value="NM_001092548.1"/>
</dbReference>
<dbReference type="SMR" id="Q6GN16"/>
<dbReference type="DNASU" id="444446"/>
<dbReference type="GeneID" id="444446"/>
<dbReference type="KEGG" id="xla:444446"/>
<dbReference type="AGR" id="Xenbase:XB-GENE-997616"/>
<dbReference type="CTD" id="444446"/>
<dbReference type="Xenbase" id="XB-GENE-997616">
    <property type="gene designation" value="pi4kb.L"/>
</dbReference>
<dbReference type="OrthoDB" id="10264149at2759"/>
<dbReference type="Proteomes" id="UP000186698">
    <property type="component" value="Chromosome 8L"/>
</dbReference>
<dbReference type="Bgee" id="444446">
    <property type="expression patterns" value="Expressed in internal ear and 19 other cell types or tissues"/>
</dbReference>
<dbReference type="GO" id="GO:0005737">
    <property type="term" value="C:cytoplasm"/>
    <property type="evidence" value="ECO:0000318"/>
    <property type="project" value="GO_Central"/>
</dbReference>
<dbReference type="GO" id="GO:0016020">
    <property type="term" value="C:membrane"/>
    <property type="evidence" value="ECO:0000318"/>
    <property type="project" value="GO_Central"/>
</dbReference>
<dbReference type="GO" id="GO:0005741">
    <property type="term" value="C:mitochondrial outer membrane"/>
    <property type="evidence" value="ECO:0007669"/>
    <property type="project" value="UniProtKB-SubCell"/>
</dbReference>
<dbReference type="GO" id="GO:0030867">
    <property type="term" value="C:rough endoplasmic reticulum membrane"/>
    <property type="evidence" value="ECO:0007669"/>
    <property type="project" value="UniProtKB-SubCell"/>
</dbReference>
<dbReference type="GO" id="GO:0004430">
    <property type="term" value="F:1-phosphatidylinositol 4-kinase activity"/>
    <property type="evidence" value="ECO:0000250"/>
    <property type="project" value="UniProtKB"/>
</dbReference>
<dbReference type="GO" id="GO:0005524">
    <property type="term" value="F:ATP binding"/>
    <property type="evidence" value="ECO:0007669"/>
    <property type="project" value="UniProtKB-KW"/>
</dbReference>
<dbReference type="GO" id="GO:0048839">
    <property type="term" value="P:inner ear development"/>
    <property type="evidence" value="ECO:0000250"/>
    <property type="project" value="UniProtKB"/>
</dbReference>
<dbReference type="GO" id="GO:0046854">
    <property type="term" value="P:phosphatidylinositol phosphate biosynthetic process"/>
    <property type="evidence" value="ECO:0000318"/>
    <property type="project" value="GO_Central"/>
</dbReference>
<dbReference type="GO" id="GO:0048015">
    <property type="term" value="P:phosphatidylinositol-mediated signaling"/>
    <property type="evidence" value="ECO:0000318"/>
    <property type="project" value="GO_Central"/>
</dbReference>
<dbReference type="CDD" id="cd22246">
    <property type="entry name" value="PI4KB_NTD"/>
    <property type="match status" value="1"/>
</dbReference>
<dbReference type="CDD" id="cd05168">
    <property type="entry name" value="PI4Kc_III_beta"/>
    <property type="match status" value="1"/>
</dbReference>
<dbReference type="FunFam" id="3.30.1010.10:FF:000031">
    <property type="entry name" value="Phosphatidylinositol 4-kinase beta"/>
    <property type="match status" value="1"/>
</dbReference>
<dbReference type="FunFam" id="1.10.1070.11:FF:000004">
    <property type="entry name" value="Phosphatidylinositol 4-kinase, catalytic, beta"/>
    <property type="match status" value="1"/>
</dbReference>
<dbReference type="Gene3D" id="1.10.1070.11">
    <property type="entry name" value="Phosphatidylinositol 3-/4-kinase, catalytic domain"/>
    <property type="match status" value="1"/>
</dbReference>
<dbReference type="Gene3D" id="3.30.1010.10">
    <property type="entry name" value="Phosphatidylinositol 3-kinase Catalytic Subunit, Chain A, domain 4"/>
    <property type="match status" value="1"/>
</dbReference>
<dbReference type="InterPro" id="IPR011009">
    <property type="entry name" value="Kinase-like_dom_sf"/>
</dbReference>
<dbReference type="InterPro" id="IPR000403">
    <property type="entry name" value="PI3/4_kinase_cat_dom"/>
</dbReference>
<dbReference type="InterPro" id="IPR036940">
    <property type="entry name" value="PI3/4_kinase_cat_sf"/>
</dbReference>
<dbReference type="InterPro" id="IPR018936">
    <property type="entry name" value="PI3/4_kinase_CS"/>
</dbReference>
<dbReference type="InterPro" id="IPR001263">
    <property type="entry name" value="PI3K_accessory_dom"/>
</dbReference>
<dbReference type="InterPro" id="IPR049160">
    <property type="entry name" value="PI4KB-PIK1_PIK"/>
</dbReference>
<dbReference type="InterPro" id="IPR015433">
    <property type="entry name" value="PI_Kinase"/>
</dbReference>
<dbReference type="PANTHER" id="PTHR10048:SF22">
    <property type="entry name" value="PHOSPHATIDYLINOSITOL 4-KINASE BETA"/>
    <property type="match status" value="1"/>
</dbReference>
<dbReference type="PANTHER" id="PTHR10048">
    <property type="entry name" value="PHOSPHATIDYLINOSITOL KINASE"/>
    <property type="match status" value="1"/>
</dbReference>
<dbReference type="Pfam" id="PF00454">
    <property type="entry name" value="PI3_PI4_kinase"/>
    <property type="match status" value="1"/>
</dbReference>
<dbReference type="Pfam" id="PF21245">
    <property type="entry name" value="PI4KB-PIK1_PIK"/>
    <property type="match status" value="1"/>
</dbReference>
<dbReference type="SMART" id="SM00146">
    <property type="entry name" value="PI3Kc"/>
    <property type="match status" value="1"/>
</dbReference>
<dbReference type="SUPFAM" id="SSF56112">
    <property type="entry name" value="Protein kinase-like (PK-like)"/>
    <property type="match status" value="1"/>
</dbReference>
<dbReference type="PROSITE" id="PS00915">
    <property type="entry name" value="PI3_4_KINASE_1"/>
    <property type="match status" value="1"/>
</dbReference>
<dbReference type="PROSITE" id="PS00916">
    <property type="entry name" value="PI3_4_KINASE_2"/>
    <property type="match status" value="1"/>
</dbReference>
<dbReference type="PROSITE" id="PS50290">
    <property type="entry name" value="PI3_4_KINASE_3"/>
    <property type="match status" value="1"/>
</dbReference>
<dbReference type="PROSITE" id="PS51545">
    <property type="entry name" value="PIK_HELICAL"/>
    <property type="match status" value="1"/>
</dbReference>
<gene>
    <name type="primary">pi4kb</name>
    <name type="synonym">pik4cb</name>
</gene>
<evidence type="ECO:0000250" key="1"/>
<evidence type="ECO:0000250" key="2">
    <source>
        <dbReference type="UniProtKB" id="Q9UBF8"/>
    </source>
</evidence>
<evidence type="ECO:0000255" key="3">
    <source>
        <dbReference type="PROSITE-ProRule" id="PRU00269"/>
    </source>
</evidence>
<evidence type="ECO:0000255" key="4">
    <source>
        <dbReference type="PROSITE-ProRule" id="PRU00878"/>
    </source>
</evidence>
<evidence type="ECO:0000256" key="5">
    <source>
        <dbReference type="SAM" id="MobiDB-lite"/>
    </source>
</evidence>
<evidence type="ECO:0000305" key="6"/>
<name>PI4KB_XENLA</name>